<feature type="chain" id="PRO_0000171031" description="ATP phosphoribosyltransferase regulatory subunit">
    <location>
        <begin position="1"/>
        <end position="378"/>
    </location>
</feature>
<gene>
    <name type="primary">hisZ</name>
    <name type="ordered locus">BRA0188</name>
    <name type="ordered locus">BS1330_II0185</name>
</gene>
<keyword id="KW-0028">Amino-acid biosynthesis</keyword>
<keyword id="KW-0963">Cytoplasm</keyword>
<keyword id="KW-0368">Histidine biosynthesis</keyword>
<organism>
    <name type="scientific">Brucella suis biovar 1 (strain 1330)</name>
    <dbReference type="NCBI Taxonomy" id="204722"/>
    <lineage>
        <taxon>Bacteria</taxon>
        <taxon>Pseudomonadati</taxon>
        <taxon>Pseudomonadota</taxon>
        <taxon>Alphaproteobacteria</taxon>
        <taxon>Hyphomicrobiales</taxon>
        <taxon>Brucellaceae</taxon>
        <taxon>Brucella/Ochrobactrum group</taxon>
        <taxon>Brucella</taxon>
    </lineage>
</organism>
<reference key="1">
    <citation type="journal article" date="2002" name="Proc. Natl. Acad. Sci. U.S.A.">
        <title>The Brucella suis genome reveals fundamental similarities between animal and plant pathogens and symbionts.</title>
        <authorList>
            <person name="Paulsen I.T."/>
            <person name="Seshadri R."/>
            <person name="Nelson K.E."/>
            <person name="Eisen J.A."/>
            <person name="Heidelberg J.F."/>
            <person name="Read T.D."/>
            <person name="Dodson R.J."/>
            <person name="Umayam L.A."/>
            <person name="Brinkac L.M."/>
            <person name="Beanan M.J."/>
            <person name="Daugherty S.C."/>
            <person name="DeBoy R.T."/>
            <person name="Durkin A.S."/>
            <person name="Kolonay J.F."/>
            <person name="Madupu R."/>
            <person name="Nelson W.C."/>
            <person name="Ayodeji B."/>
            <person name="Kraul M."/>
            <person name="Shetty J."/>
            <person name="Malek J.A."/>
            <person name="Van Aken S.E."/>
            <person name="Riedmuller S."/>
            <person name="Tettelin H."/>
            <person name="Gill S.R."/>
            <person name="White O."/>
            <person name="Salzberg S.L."/>
            <person name="Hoover D.L."/>
            <person name="Lindler L.E."/>
            <person name="Halling S.M."/>
            <person name="Boyle S.M."/>
            <person name="Fraser C.M."/>
        </authorList>
    </citation>
    <scope>NUCLEOTIDE SEQUENCE [LARGE SCALE GENOMIC DNA]</scope>
    <source>
        <strain>1330</strain>
    </source>
</reference>
<reference key="2">
    <citation type="journal article" date="2011" name="J. Bacteriol.">
        <title>Revised genome sequence of Brucella suis 1330.</title>
        <authorList>
            <person name="Tae H."/>
            <person name="Shallom S."/>
            <person name="Settlage R."/>
            <person name="Preston D."/>
            <person name="Adams L.G."/>
            <person name="Garner H.R."/>
        </authorList>
    </citation>
    <scope>NUCLEOTIDE SEQUENCE [LARGE SCALE GENOMIC DNA]</scope>
    <source>
        <strain>1330</strain>
    </source>
</reference>
<comment type="function">
    <text evidence="1">Required for the first step of histidine biosynthesis. May allow the feedback regulation of ATP phosphoribosyltransferase activity by histidine (By similarity).</text>
</comment>
<comment type="pathway">
    <text>Amino-acid biosynthesis; L-histidine biosynthesis; L-histidine from 5-phospho-alpha-D-ribose 1-diphosphate: step 1/9.</text>
</comment>
<comment type="subunit">
    <text evidence="1">Heteromultimer composed of HisG and HisZ subunits.</text>
</comment>
<comment type="subcellular location">
    <subcellularLocation>
        <location evidence="1">Cytoplasm</location>
    </subcellularLocation>
</comment>
<comment type="miscellaneous">
    <text>This function is generally fulfilled by the C-terminal part of HisG, which is missing in some bacteria such as this one.</text>
</comment>
<comment type="similarity">
    <text evidence="2">Belongs to the class-II aminoacyl-tRNA synthetase family. HisZ subfamily.</text>
</comment>
<comment type="sequence caution" evidence="2">
    <conflict type="erroneous initiation">
        <sequence resource="EMBL-CDS" id="AAN33395"/>
    </conflict>
</comment>
<comment type="sequence caution" evidence="2">
    <conflict type="erroneous initiation">
        <sequence resource="EMBL-CDS" id="AEM19672"/>
    </conflict>
    <text>Truncated N-terminus.</text>
</comment>
<evidence type="ECO:0000250" key="1"/>
<evidence type="ECO:0000305" key="2"/>
<name>HISZ_BRUSU</name>
<protein>
    <recommendedName>
        <fullName>ATP phosphoribosyltransferase regulatory subunit</fullName>
    </recommendedName>
</protein>
<sequence length="378" mass="40891">MTMVGSRTSPIFNALRVELNAREAELVEIPLIQPADPFLDMAGEDLRRRIFLTENENGDSLCLRPEFTIPVCRNHIALNAATPKRYAYLGEVFRQRRDGAAEFLQAGIEDLGAADEAASDARSLADALSCVKAIAPDAPLEIVLGDQSVFAGMLKALGLPQGWRKKLLRSFGDAHSMDLALAELTGTQRRDPLPESLAVLVAEGDEIGLARMLEAEMLEAGISPGAGRTPVEIARRLIEKEDLAATHFPAAALDLLRQFLAIRVSLDTAAVTLRAFAADNALDLGAVLQKFEARADAIAQAGIEMKDIIYDASFGRPLDYYTGLVYEIRDASNRQDGVLAGGGRYDRLLTMLGACEAIPGVGFSIWLDRLQALAGEKQ</sequence>
<accession>P64378</accession>
<accession>G0KF28</accession>
<accession>Q8YB46</accession>
<dbReference type="EMBL" id="AE014292">
    <property type="protein sequence ID" value="AAN33395.1"/>
    <property type="status" value="ALT_INIT"/>
    <property type="molecule type" value="Genomic_DNA"/>
</dbReference>
<dbReference type="EMBL" id="CP002998">
    <property type="protein sequence ID" value="AEM19672.1"/>
    <property type="status" value="ALT_INIT"/>
    <property type="molecule type" value="Genomic_DNA"/>
</dbReference>
<dbReference type="SMR" id="P64378"/>
<dbReference type="KEGG" id="bms:BRA0188"/>
<dbReference type="KEGG" id="bsi:BS1330_II0185"/>
<dbReference type="HOGENOM" id="CLU_025113_6_0_5"/>
<dbReference type="UniPathway" id="UPA00031">
    <property type="reaction ID" value="UER00006"/>
</dbReference>
<dbReference type="Proteomes" id="UP000007104">
    <property type="component" value="Chromosome II"/>
</dbReference>
<dbReference type="GO" id="GO:0005737">
    <property type="term" value="C:cytoplasm"/>
    <property type="evidence" value="ECO:0007669"/>
    <property type="project" value="UniProtKB-SubCell"/>
</dbReference>
<dbReference type="GO" id="GO:0004821">
    <property type="term" value="F:histidine-tRNA ligase activity"/>
    <property type="evidence" value="ECO:0007669"/>
    <property type="project" value="TreeGrafter"/>
</dbReference>
<dbReference type="GO" id="GO:0006427">
    <property type="term" value="P:histidyl-tRNA aminoacylation"/>
    <property type="evidence" value="ECO:0007669"/>
    <property type="project" value="TreeGrafter"/>
</dbReference>
<dbReference type="GO" id="GO:0000105">
    <property type="term" value="P:L-histidine biosynthetic process"/>
    <property type="evidence" value="ECO:0007669"/>
    <property type="project" value="UniProtKB-UniRule"/>
</dbReference>
<dbReference type="Gene3D" id="3.30.930.10">
    <property type="entry name" value="Bira Bifunctional Protein, Domain 2"/>
    <property type="match status" value="1"/>
</dbReference>
<dbReference type="HAMAP" id="MF_00125">
    <property type="entry name" value="HisZ"/>
    <property type="match status" value="1"/>
</dbReference>
<dbReference type="InterPro" id="IPR045864">
    <property type="entry name" value="aa-tRNA-synth_II/BPL/LPL"/>
</dbReference>
<dbReference type="InterPro" id="IPR041715">
    <property type="entry name" value="HisRS-like_core"/>
</dbReference>
<dbReference type="InterPro" id="IPR004516">
    <property type="entry name" value="HisRS/HisZ"/>
</dbReference>
<dbReference type="InterPro" id="IPR004517">
    <property type="entry name" value="HisZ"/>
</dbReference>
<dbReference type="NCBIfam" id="NF008948">
    <property type="entry name" value="PRK12295.1-1"/>
    <property type="match status" value="1"/>
</dbReference>
<dbReference type="NCBIfam" id="NF008951">
    <property type="entry name" value="PRK12295.1-4"/>
    <property type="match status" value="1"/>
</dbReference>
<dbReference type="PANTHER" id="PTHR43707:SF1">
    <property type="entry name" value="HISTIDINE--TRNA LIGASE, MITOCHONDRIAL-RELATED"/>
    <property type="match status" value="1"/>
</dbReference>
<dbReference type="PANTHER" id="PTHR43707">
    <property type="entry name" value="HISTIDYL-TRNA SYNTHETASE"/>
    <property type="match status" value="1"/>
</dbReference>
<dbReference type="Pfam" id="PF13393">
    <property type="entry name" value="tRNA-synt_His"/>
    <property type="match status" value="2"/>
</dbReference>
<dbReference type="PIRSF" id="PIRSF001549">
    <property type="entry name" value="His-tRNA_synth"/>
    <property type="match status" value="1"/>
</dbReference>
<dbReference type="SUPFAM" id="SSF55681">
    <property type="entry name" value="Class II aaRS and biotin synthetases"/>
    <property type="match status" value="1"/>
</dbReference>
<proteinExistence type="inferred from homology"/>